<accession>P0A7K5</accession>
<accession>P02392</accession>
<comment type="function">
    <text evidence="2">Forms part of the ribosomal stalk which helps the ribosome interact with GTP-bound translation factors. Is thus essential for accurate translation.</text>
</comment>
<comment type="subunit">
    <text evidence="2">Homodimer. Part of the ribosomal stalk of the 50S ribosomal subunit. Forms a multimeric L10(L12)X complex, where L10 forms an elongated spine to which 2 to 4 L12 dimers bind in a sequential fashion. Binds GTP-bound translation factors.</text>
</comment>
<comment type="similarity">
    <text evidence="2">Belongs to the bacterial ribosomal protein bL12 family.</text>
</comment>
<proteinExistence type="inferred from homology"/>
<organism>
    <name type="scientific">Shigella flexneri</name>
    <dbReference type="NCBI Taxonomy" id="623"/>
    <lineage>
        <taxon>Bacteria</taxon>
        <taxon>Pseudomonadati</taxon>
        <taxon>Pseudomonadota</taxon>
        <taxon>Gammaproteobacteria</taxon>
        <taxon>Enterobacterales</taxon>
        <taxon>Enterobacteriaceae</taxon>
        <taxon>Shigella</taxon>
    </lineage>
</organism>
<reference key="1">
    <citation type="journal article" date="2002" name="Nucleic Acids Res.">
        <title>Genome sequence of Shigella flexneri 2a: insights into pathogenicity through comparison with genomes of Escherichia coli K12 and O157.</title>
        <authorList>
            <person name="Jin Q."/>
            <person name="Yuan Z."/>
            <person name="Xu J."/>
            <person name="Wang Y."/>
            <person name="Shen Y."/>
            <person name="Lu W."/>
            <person name="Wang J."/>
            <person name="Liu H."/>
            <person name="Yang J."/>
            <person name="Yang F."/>
            <person name="Zhang X."/>
            <person name="Zhang J."/>
            <person name="Yang G."/>
            <person name="Wu H."/>
            <person name="Qu D."/>
            <person name="Dong J."/>
            <person name="Sun L."/>
            <person name="Xue Y."/>
            <person name="Zhao A."/>
            <person name="Gao Y."/>
            <person name="Zhu J."/>
            <person name="Kan B."/>
            <person name="Ding K."/>
            <person name="Chen S."/>
            <person name="Cheng H."/>
            <person name="Yao Z."/>
            <person name="He B."/>
            <person name="Chen R."/>
            <person name="Ma D."/>
            <person name="Qiang B."/>
            <person name="Wen Y."/>
            <person name="Hou Y."/>
            <person name="Yu J."/>
        </authorList>
    </citation>
    <scope>NUCLEOTIDE SEQUENCE [LARGE SCALE GENOMIC DNA]</scope>
    <source>
        <strain>301 / Serotype 2a</strain>
    </source>
</reference>
<reference key="2">
    <citation type="journal article" date="2003" name="Infect. Immun.">
        <title>Complete genome sequence and comparative genomics of Shigella flexneri serotype 2a strain 2457T.</title>
        <authorList>
            <person name="Wei J."/>
            <person name="Goldberg M.B."/>
            <person name="Burland V."/>
            <person name="Venkatesan M.M."/>
            <person name="Deng W."/>
            <person name="Fournier G."/>
            <person name="Mayhew G.F."/>
            <person name="Plunkett G. III"/>
            <person name="Rose D.J."/>
            <person name="Darling A."/>
            <person name="Mau B."/>
            <person name="Perna N.T."/>
            <person name="Payne S.M."/>
            <person name="Runyen-Janecky L.J."/>
            <person name="Zhou S."/>
            <person name="Schwartz D.C."/>
            <person name="Blattner F.R."/>
        </authorList>
    </citation>
    <scope>NUCLEOTIDE SEQUENCE [LARGE SCALE GENOMIC DNA]</scope>
    <source>
        <strain>ATCC 700930 / 2457T / Serotype 2a</strain>
    </source>
</reference>
<name>RL7_SHIFL</name>
<protein>
    <recommendedName>
        <fullName evidence="2">Large ribosomal subunit protein bL12</fullName>
    </recommendedName>
    <alternativeName>
        <fullName evidence="3">50S ribosomal protein L7/L12</fullName>
    </alternativeName>
    <alternativeName>
        <fullName>L8</fullName>
    </alternativeName>
</protein>
<sequence length="121" mass="12295">MSITKDQIIEAVAAMSVMDVVELISAMEEKFGVSAAAAVAVAAGPVEAAEEKTEFDVILKAAGANKVAVIKAVRGATGLGLKEAKDLVESAPAALKEGVSKDDAEALKKALEEAGAEVEVK</sequence>
<feature type="initiator methionine" description="Removed" evidence="1">
    <location>
        <position position="1"/>
    </location>
</feature>
<feature type="chain" id="PRO_0000157573" description="Large ribosomal subunit protein bL12">
    <location>
        <begin position="2"/>
        <end position="121"/>
    </location>
</feature>
<dbReference type="EMBL" id="AE005674">
    <property type="protein sequence ID" value="AAN45488.1"/>
    <property type="molecule type" value="Genomic_DNA"/>
</dbReference>
<dbReference type="EMBL" id="AE014073">
    <property type="protein sequence ID" value="AAP18713.1"/>
    <property type="molecule type" value="Genomic_DNA"/>
</dbReference>
<dbReference type="RefSeq" id="NP_709781.1">
    <property type="nucleotide sequence ID" value="NC_004337.2"/>
</dbReference>
<dbReference type="RefSeq" id="WP_000028878.1">
    <property type="nucleotide sequence ID" value="NZ_WPGW01000040.1"/>
</dbReference>
<dbReference type="SMR" id="P0A7K5"/>
<dbReference type="STRING" id="198214.SF4059"/>
<dbReference type="PaxDb" id="198214-SF4059"/>
<dbReference type="GeneID" id="1023608"/>
<dbReference type="GeneID" id="86944525"/>
<dbReference type="KEGG" id="sfl:SF4059"/>
<dbReference type="KEGG" id="sfx:S3676"/>
<dbReference type="PATRIC" id="fig|198214.7.peg.4782"/>
<dbReference type="HOGENOM" id="CLU_086499_3_2_6"/>
<dbReference type="Proteomes" id="UP000001006">
    <property type="component" value="Chromosome"/>
</dbReference>
<dbReference type="Proteomes" id="UP000002673">
    <property type="component" value="Chromosome"/>
</dbReference>
<dbReference type="GO" id="GO:0022625">
    <property type="term" value="C:cytosolic large ribosomal subunit"/>
    <property type="evidence" value="ECO:0007669"/>
    <property type="project" value="TreeGrafter"/>
</dbReference>
<dbReference type="GO" id="GO:0003729">
    <property type="term" value="F:mRNA binding"/>
    <property type="evidence" value="ECO:0007669"/>
    <property type="project" value="TreeGrafter"/>
</dbReference>
<dbReference type="GO" id="GO:0003735">
    <property type="term" value="F:structural constituent of ribosome"/>
    <property type="evidence" value="ECO:0007669"/>
    <property type="project" value="InterPro"/>
</dbReference>
<dbReference type="GO" id="GO:0006412">
    <property type="term" value="P:translation"/>
    <property type="evidence" value="ECO:0007669"/>
    <property type="project" value="UniProtKB-UniRule"/>
</dbReference>
<dbReference type="CDD" id="cd00387">
    <property type="entry name" value="Ribosomal_L7_L12"/>
    <property type="match status" value="1"/>
</dbReference>
<dbReference type="FunFam" id="1.20.5.710:FF:000001">
    <property type="entry name" value="50S ribosomal protein L7/L12"/>
    <property type="match status" value="1"/>
</dbReference>
<dbReference type="FunFam" id="3.30.1390.10:FF:000001">
    <property type="entry name" value="50S ribosomal protein L7/L12"/>
    <property type="match status" value="1"/>
</dbReference>
<dbReference type="Gene3D" id="3.30.1390.10">
    <property type="match status" value="1"/>
</dbReference>
<dbReference type="Gene3D" id="1.20.5.710">
    <property type="entry name" value="Single helix bin"/>
    <property type="match status" value="1"/>
</dbReference>
<dbReference type="HAMAP" id="MF_00368">
    <property type="entry name" value="Ribosomal_bL12"/>
    <property type="match status" value="1"/>
</dbReference>
<dbReference type="InterPro" id="IPR000206">
    <property type="entry name" value="Ribosomal_bL12"/>
</dbReference>
<dbReference type="InterPro" id="IPR013823">
    <property type="entry name" value="Ribosomal_bL12_C"/>
</dbReference>
<dbReference type="InterPro" id="IPR014719">
    <property type="entry name" value="Ribosomal_bL12_C/ClpS-like"/>
</dbReference>
<dbReference type="InterPro" id="IPR008932">
    <property type="entry name" value="Ribosomal_bL12_oligo"/>
</dbReference>
<dbReference type="InterPro" id="IPR036235">
    <property type="entry name" value="Ribosomal_bL12_oligo_N_sf"/>
</dbReference>
<dbReference type="NCBIfam" id="TIGR00855">
    <property type="entry name" value="L12"/>
    <property type="match status" value="1"/>
</dbReference>
<dbReference type="PANTHER" id="PTHR45987">
    <property type="entry name" value="39S RIBOSOMAL PROTEIN L12"/>
    <property type="match status" value="1"/>
</dbReference>
<dbReference type="PANTHER" id="PTHR45987:SF4">
    <property type="entry name" value="LARGE RIBOSOMAL SUBUNIT PROTEIN BL12M"/>
    <property type="match status" value="1"/>
</dbReference>
<dbReference type="Pfam" id="PF00542">
    <property type="entry name" value="Ribosomal_L12"/>
    <property type="match status" value="1"/>
</dbReference>
<dbReference type="Pfam" id="PF16320">
    <property type="entry name" value="Ribosomal_L12_N"/>
    <property type="match status" value="1"/>
</dbReference>
<dbReference type="SUPFAM" id="SSF54736">
    <property type="entry name" value="ClpS-like"/>
    <property type="match status" value="1"/>
</dbReference>
<dbReference type="SUPFAM" id="SSF48300">
    <property type="entry name" value="Ribosomal protein L7/12, oligomerisation (N-terminal) domain"/>
    <property type="match status" value="1"/>
</dbReference>
<keyword id="KW-1185">Reference proteome</keyword>
<keyword id="KW-0687">Ribonucleoprotein</keyword>
<keyword id="KW-0689">Ribosomal protein</keyword>
<gene>
    <name evidence="2" type="primary">rplL</name>
    <name type="ordered locus">SF4059</name>
    <name type="ordered locus">S3676</name>
</gene>
<evidence type="ECO:0000250" key="1"/>
<evidence type="ECO:0000255" key="2">
    <source>
        <dbReference type="HAMAP-Rule" id="MF_00368"/>
    </source>
</evidence>
<evidence type="ECO:0000305" key="3"/>